<sequence length="876" mass="99814">MSSITSETGKRRVKRTYEVTRQNDNAVRIEPSSLGEEEDKEAKDKNSALQLKRSRYDPNKVFSNTNQGPEKNNLKGEQLGSQKKSSKYDEKITSNNELTTKKGLLGDSENETKYASSNSKFNVEVTHKIKNAKEIDKINRQRMWEEQQLRNAMAGQSDHPDDITLEGSDKYDYVFDTDAMIDYTNEEDDLLPEEKLQYEARLAQALETEEKRILTIQEARKLLPVHQYKDELLQEIKKNQVLIIMGETGSGKTTQLPQYLVEDGFTDQGKLQIAITQPRRVAATSVAARVADEMNVVLGKEVGYQIRFEDKTTPNKTVLKYMTDGMLLREFLTDSKLSKYSCIMIDEAHERTLATDILIGLLKDILPQRPTLKLLISSATMNAKKFSEFFDNCPIFNVPGRRYPVDIHYTLQPEANYIHAAITTIFQIHTTQSLPGDILVFLTGQEEIERTKTKLEEIMSKLGSRTKQMIITPIYANLPQEQQLKIFQPTPENCRKVVLATNIAETSLTIDGIRYVIDPGFVKENSYVPSTGMTQLLTVPCSRASVDQRAGRAGRVGPGKCFRIFTKWSYLHELELMPKPEITRTNLSNTVLLLLSLGVTDLIKFPLMDKPSIPTLRKSLENLYILGALNSKGTITRLGKMMCEFPCEPEFAKVLYTAATHEQCQGVLEECLTIVSMLHETPSLFIGQKRDAAASVLSEVESDHILYLEIFNQWRNSKFSRSWCQDHKIQFKTMLRVRNIRNQLFRCSEKVGLVEKNDQARMKIGNIAGYINARITRCFISGFPMNIVQLGPTGYQTMGRSSGGLNVSVHPTSILFVNHKEKAQRPSKYVLYQQLMLTSKEFIRDCLVIPKEEWLIDMVPQIFKDLIDDKTNRGRR</sequence>
<dbReference type="EC" id="3.6.4.13"/>
<dbReference type="EMBL" id="X55936">
    <property type="protein sequence ID" value="CAA39401.1"/>
    <property type="molecule type" value="Genomic_DNA"/>
</dbReference>
<dbReference type="EMBL" id="X55999">
    <property type="protein sequence ID" value="CAA39471.1"/>
    <property type="molecule type" value="Genomic_DNA"/>
</dbReference>
<dbReference type="EMBL" id="X77395">
    <property type="protein sequence ID" value="CAA54579.1"/>
    <property type="molecule type" value="Genomic_DNA"/>
</dbReference>
<dbReference type="EMBL" id="Z71626">
    <property type="protein sequence ID" value="CAA96288.1"/>
    <property type="molecule type" value="Genomic_DNA"/>
</dbReference>
<dbReference type="EMBL" id="BK006947">
    <property type="protein sequence ID" value="DAA10552.1"/>
    <property type="molecule type" value="Genomic_DNA"/>
</dbReference>
<dbReference type="PIR" id="S12334">
    <property type="entry name" value="S12334"/>
</dbReference>
<dbReference type="RefSeq" id="NP_014408.1">
    <property type="nucleotide sequence ID" value="NM_001183188.1"/>
</dbReference>
<dbReference type="PDB" id="5GM6">
    <property type="method" value="EM"/>
    <property type="resolution" value="3.50 A"/>
    <property type="chains" value="Y=1-876"/>
</dbReference>
<dbReference type="PDB" id="5LQW">
    <property type="method" value="EM"/>
    <property type="resolution" value="5.80 A"/>
    <property type="chains" value="O=1-876"/>
</dbReference>
<dbReference type="PDB" id="7DCO">
    <property type="method" value="EM"/>
    <property type="resolution" value="2.50 A"/>
    <property type="chains" value="x=1-876"/>
</dbReference>
<dbReference type="PDB" id="7DCP">
    <property type="method" value="EM"/>
    <property type="resolution" value="3.15 A"/>
    <property type="chains" value="x=12-867"/>
</dbReference>
<dbReference type="PDB" id="7DCQ">
    <property type="method" value="EM"/>
    <property type="resolution" value="2.90 A"/>
    <property type="chains" value="x=1-876"/>
</dbReference>
<dbReference type="PDB" id="7DCR">
    <property type="method" value="EM"/>
    <property type="resolution" value="3.15 A"/>
    <property type="chains" value="x=1-876"/>
</dbReference>
<dbReference type="PDB" id="7DD3">
    <property type="method" value="EM"/>
    <property type="resolution" value="3.20 A"/>
    <property type="chains" value="x=1-876"/>
</dbReference>
<dbReference type="PDBsum" id="5GM6"/>
<dbReference type="PDBsum" id="5LQW"/>
<dbReference type="PDBsum" id="7DCO"/>
<dbReference type="PDBsum" id="7DCP"/>
<dbReference type="PDBsum" id="7DCQ"/>
<dbReference type="PDBsum" id="7DCR"/>
<dbReference type="PDBsum" id="7DD3"/>
<dbReference type="EMDB" id="EMD-30637"/>
<dbReference type="EMDB" id="EMD-9524"/>
<dbReference type="SMR" id="P20095"/>
<dbReference type="BioGRID" id="35836">
    <property type="interactions" value="314"/>
</dbReference>
<dbReference type="DIP" id="DIP-3961N"/>
<dbReference type="FunCoup" id="P20095">
    <property type="interactions" value="149"/>
</dbReference>
<dbReference type="IntAct" id="P20095">
    <property type="interactions" value="36"/>
</dbReference>
<dbReference type="MINT" id="P20095"/>
<dbReference type="STRING" id="4932.YNR011C"/>
<dbReference type="iPTMnet" id="P20095"/>
<dbReference type="PaxDb" id="4932-YNR011C"/>
<dbReference type="PeptideAtlas" id="P20095"/>
<dbReference type="EnsemblFungi" id="YNR011C_mRNA">
    <property type="protein sequence ID" value="YNR011C"/>
    <property type="gene ID" value="YNR011C"/>
</dbReference>
<dbReference type="GeneID" id="855745"/>
<dbReference type="KEGG" id="sce:YNR011C"/>
<dbReference type="AGR" id="SGD:S000005294"/>
<dbReference type="SGD" id="S000005294">
    <property type="gene designation" value="PRP2"/>
</dbReference>
<dbReference type="VEuPathDB" id="FungiDB:YNR011C"/>
<dbReference type="eggNOG" id="KOG0923">
    <property type="taxonomic scope" value="Eukaryota"/>
</dbReference>
<dbReference type="GeneTree" id="ENSGT00940000158480"/>
<dbReference type="HOGENOM" id="CLU_001832_7_2_1"/>
<dbReference type="InParanoid" id="P20095"/>
<dbReference type="OMA" id="PLDPMMS"/>
<dbReference type="OrthoDB" id="10253254at2759"/>
<dbReference type="BioCyc" id="YEAST:G3O-33328-MONOMER"/>
<dbReference type="BioGRID-ORCS" id="855745">
    <property type="hits" value="1 hit in 10 CRISPR screens"/>
</dbReference>
<dbReference type="PRO" id="PR:P20095"/>
<dbReference type="Proteomes" id="UP000002311">
    <property type="component" value="Chromosome XIV"/>
</dbReference>
<dbReference type="RNAct" id="P20095">
    <property type="molecule type" value="protein"/>
</dbReference>
<dbReference type="GO" id="GO:0071006">
    <property type="term" value="C:U2-type catalytic step 1 spliceosome"/>
    <property type="evidence" value="ECO:0000314"/>
    <property type="project" value="SGD"/>
</dbReference>
<dbReference type="GO" id="GO:0005524">
    <property type="term" value="F:ATP binding"/>
    <property type="evidence" value="ECO:0007669"/>
    <property type="project" value="UniProtKB-KW"/>
</dbReference>
<dbReference type="GO" id="GO:0016887">
    <property type="term" value="F:ATP hydrolysis activity"/>
    <property type="evidence" value="ECO:0007669"/>
    <property type="project" value="RHEA"/>
</dbReference>
<dbReference type="GO" id="GO:0008186">
    <property type="term" value="F:ATP-dependent activity, acting on RNA"/>
    <property type="evidence" value="ECO:0000314"/>
    <property type="project" value="SGD"/>
</dbReference>
<dbReference type="GO" id="GO:0004386">
    <property type="term" value="F:helicase activity"/>
    <property type="evidence" value="ECO:0000318"/>
    <property type="project" value="GO_Central"/>
</dbReference>
<dbReference type="GO" id="GO:0003723">
    <property type="term" value="F:RNA binding"/>
    <property type="evidence" value="ECO:0000318"/>
    <property type="project" value="GO_Central"/>
</dbReference>
<dbReference type="GO" id="GO:0003724">
    <property type="term" value="F:RNA helicase activity"/>
    <property type="evidence" value="ECO:0007669"/>
    <property type="project" value="UniProtKB-EC"/>
</dbReference>
<dbReference type="GO" id="GO:0000349">
    <property type="term" value="P:generation of catalytic spliceosome for first transesterification step"/>
    <property type="evidence" value="ECO:0000314"/>
    <property type="project" value="SGD"/>
</dbReference>
<dbReference type="GO" id="GO:0034247">
    <property type="term" value="P:snoRNA splicing"/>
    <property type="evidence" value="ECO:0000315"/>
    <property type="project" value="SGD"/>
</dbReference>
<dbReference type="CDD" id="cd18791">
    <property type="entry name" value="SF2_C_RHA"/>
    <property type="match status" value="1"/>
</dbReference>
<dbReference type="FunFam" id="3.40.50.300:FF:000007">
    <property type="entry name" value="Pre-mRNA-splicing factor ATP-dependent RNA helicase"/>
    <property type="match status" value="1"/>
</dbReference>
<dbReference type="FunFam" id="3.40.50.300:FF:000726">
    <property type="entry name" value="Pre-mRNA-splicing factor ATP-dependent RNA helicase"/>
    <property type="match status" value="1"/>
</dbReference>
<dbReference type="FunFam" id="1.20.120.1080:FF:000043">
    <property type="entry name" value="PRP2p RNA-dependent DExD/H-box ATPase"/>
    <property type="match status" value="1"/>
</dbReference>
<dbReference type="Gene3D" id="1.20.120.1080">
    <property type="match status" value="1"/>
</dbReference>
<dbReference type="Gene3D" id="3.40.50.300">
    <property type="entry name" value="P-loop containing nucleotide triphosphate hydrolases"/>
    <property type="match status" value="2"/>
</dbReference>
<dbReference type="InterPro" id="IPR011709">
    <property type="entry name" value="DEAD-box_helicase_OB_fold"/>
</dbReference>
<dbReference type="InterPro" id="IPR011545">
    <property type="entry name" value="DEAD/DEAH_box_helicase_dom"/>
</dbReference>
<dbReference type="InterPro" id="IPR002464">
    <property type="entry name" value="DNA/RNA_helicase_DEAH_CS"/>
</dbReference>
<dbReference type="InterPro" id="IPR048333">
    <property type="entry name" value="HA2_WH"/>
</dbReference>
<dbReference type="InterPro" id="IPR007502">
    <property type="entry name" value="Helicase-assoc_dom"/>
</dbReference>
<dbReference type="InterPro" id="IPR014001">
    <property type="entry name" value="Helicase_ATP-bd"/>
</dbReference>
<dbReference type="InterPro" id="IPR001650">
    <property type="entry name" value="Helicase_C-like"/>
</dbReference>
<dbReference type="InterPro" id="IPR027417">
    <property type="entry name" value="P-loop_NTPase"/>
</dbReference>
<dbReference type="PANTHER" id="PTHR18934">
    <property type="entry name" value="ATP-DEPENDENT RNA HELICASE"/>
    <property type="match status" value="1"/>
</dbReference>
<dbReference type="PANTHER" id="PTHR18934:SF83">
    <property type="entry name" value="PRE-MRNA-SPLICING FACTOR ATP-DEPENDENT RNA HELICASE DHX16"/>
    <property type="match status" value="1"/>
</dbReference>
<dbReference type="Pfam" id="PF00270">
    <property type="entry name" value="DEAD"/>
    <property type="match status" value="1"/>
</dbReference>
<dbReference type="Pfam" id="PF21010">
    <property type="entry name" value="HA2_C"/>
    <property type="match status" value="1"/>
</dbReference>
<dbReference type="Pfam" id="PF04408">
    <property type="entry name" value="HA2_N"/>
    <property type="match status" value="1"/>
</dbReference>
<dbReference type="Pfam" id="PF00271">
    <property type="entry name" value="Helicase_C"/>
    <property type="match status" value="1"/>
</dbReference>
<dbReference type="Pfam" id="PF07717">
    <property type="entry name" value="OB_NTP_bind"/>
    <property type="match status" value="1"/>
</dbReference>
<dbReference type="SMART" id="SM00487">
    <property type="entry name" value="DEXDc"/>
    <property type="match status" value="1"/>
</dbReference>
<dbReference type="SMART" id="SM00847">
    <property type="entry name" value="HA2"/>
    <property type="match status" value="1"/>
</dbReference>
<dbReference type="SMART" id="SM00490">
    <property type="entry name" value="HELICc"/>
    <property type="match status" value="1"/>
</dbReference>
<dbReference type="SUPFAM" id="SSF52540">
    <property type="entry name" value="P-loop containing nucleoside triphosphate hydrolases"/>
    <property type="match status" value="1"/>
</dbReference>
<dbReference type="PROSITE" id="PS00690">
    <property type="entry name" value="DEAH_ATP_HELICASE"/>
    <property type="match status" value="1"/>
</dbReference>
<dbReference type="PROSITE" id="PS51192">
    <property type="entry name" value="HELICASE_ATP_BIND_1"/>
    <property type="match status" value="1"/>
</dbReference>
<dbReference type="PROSITE" id="PS51194">
    <property type="entry name" value="HELICASE_CTER"/>
    <property type="match status" value="1"/>
</dbReference>
<feature type="initiator methionine" description="Removed" evidence="16">
    <location>
        <position position="1"/>
    </location>
</feature>
<feature type="chain" id="PRO_0000055130" description="Pre-mRNA-splicing factor ATP-dependent RNA helicase-like protein PRP2">
    <location>
        <begin position="2"/>
        <end position="876"/>
    </location>
</feature>
<feature type="domain" description="Helicase ATP-binding" evidence="1">
    <location>
        <begin position="233"/>
        <end position="399"/>
    </location>
</feature>
<feature type="domain" description="Helicase C-terminal" evidence="2">
    <location>
        <begin position="424"/>
        <end position="598"/>
    </location>
</feature>
<feature type="region of interest" description="Disordered" evidence="3">
    <location>
        <begin position="1"/>
        <end position="111"/>
    </location>
</feature>
<feature type="short sequence motif" description="DEAH box">
    <location>
        <begin position="346"/>
        <end position="349"/>
    </location>
</feature>
<feature type="compositionally biased region" description="Polar residues" evidence="3">
    <location>
        <begin position="61"/>
        <end position="70"/>
    </location>
</feature>
<feature type="binding site" evidence="1">
    <location>
        <begin position="246"/>
        <end position="253"/>
    </location>
    <ligand>
        <name>ATP</name>
        <dbReference type="ChEBI" id="CHEBI:30616"/>
    </ligand>
</feature>
<feature type="modified residue" description="N-acetylserine" evidence="16">
    <location>
        <position position="2"/>
    </location>
</feature>
<feature type="mutagenesis site" description="No effect on activity.">
    <location>
        <begin position="6"/>
        <end position="206"/>
    </location>
</feature>
<feature type="mutagenesis site" description="Loss of ATPase and splicing activity.">
    <location>
        <begin position="89"/>
        <end position="552"/>
    </location>
</feature>
<feature type="mutagenesis site" description="Wild-type RNA-dependent ATPase activity; bound tightly to the spliceosome and after addition of ATP released from the spliceosome.">
    <location>
        <begin position="89"/>
        <end position="206"/>
    </location>
</feature>
<feature type="mutagenesis site" description="Fails to release from the spliceosome; when associated with H-548." evidence="6">
    <original>H</original>
    <variation>D</variation>
    <location>
        <position position="349"/>
    </location>
</feature>
<feature type="mutagenesis site" description="In PRP2-dn1; 40% of wild-type RNA-stimulated ATPase activity; splicing activity abolished; accumulates stalled splicing complexes." evidence="12">
    <original>S</original>
    <variation>L</variation>
    <location>
        <position position="378"/>
    </location>
</feature>
<feature type="mutagenesis site" description="Fails to release from the spliceosome; when associated with D-349." evidence="6">
    <original>Q</original>
    <variation>H</variation>
    <location>
        <position position="548"/>
    </location>
</feature>
<feature type="mutagenesis site" description="Fails to release from the spliceosome." evidence="6">
    <original>G</original>
    <variation>N</variation>
    <location>
        <position position="551"/>
    </location>
</feature>
<feature type="mutagenesis site" description="Has small amount of ATPase activity, but no splicing activity.">
    <location>
        <begin position="554"/>
        <end position="876"/>
    </location>
</feature>
<feature type="mutagenesis site" description="Loss of activity.">
    <location>
        <begin position="615"/>
        <end position="876"/>
    </location>
</feature>
<feature type="mutagenesis site" description="Spliceosome binding mutant; not active in splicing; when associated with N-551.">
    <location>
        <begin position="824"/>
        <end position="876"/>
    </location>
</feature>
<feature type="mutagenesis site" description="Spliceosome binding mutant; not active in splicing; when associated with N-551.">
    <location>
        <begin position="833"/>
        <end position="876"/>
    </location>
</feature>
<feature type="mutagenesis site" description="Spliceosome binding mutant; not active in splicing; when associated with N-551. Almost wild-type RNA-dependent ATPase activity.">
    <location>
        <begin position="834"/>
        <end position="876"/>
    </location>
</feature>
<feature type="mutagenesis site" description="Spliceosome binding mutant; not active in splicing; when associated with N-551, or D-349 and H-548. Loss of interaction with SPP2." evidence="6 8">
    <original>DC</original>
    <variation>NY</variation>
    <location>
        <begin position="845"/>
        <end position="846"/>
    </location>
</feature>
<feature type="mutagenesis site" description="Temperature-sensitive; decreased interaction with SPP2, decreased cell growth on benomyl and decreased splicing at elevated temperatures; when associated with D-349 and H-548." evidence="8">
    <original>D</original>
    <variation>L</variation>
    <location>
        <position position="845"/>
    </location>
</feature>
<feature type="mutagenesis site" description="Loss of interaction with SPP2." evidence="8">
    <original>WL</original>
    <variation>AA</variation>
    <location>
        <begin position="854"/>
        <end position="855"/>
    </location>
</feature>
<feature type="helix" evidence="17">
    <location>
        <begin position="13"/>
        <end position="15"/>
    </location>
</feature>
<feature type="turn" evidence="18">
    <location>
        <begin position="216"/>
        <end position="218"/>
    </location>
</feature>
<feature type="turn" evidence="19">
    <location>
        <begin position="219"/>
        <end position="222"/>
    </location>
</feature>
<feature type="helix" evidence="18">
    <location>
        <begin position="226"/>
        <end position="228"/>
    </location>
</feature>
<feature type="helix" evidence="18">
    <location>
        <begin position="229"/>
        <end position="238"/>
    </location>
</feature>
<feature type="strand" evidence="18">
    <location>
        <begin position="240"/>
        <end position="246"/>
    </location>
</feature>
<feature type="helix" evidence="18">
    <location>
        <begin position="252"/>
        <end position="262"/>
    </location>
</feature>
<feature type="strand" evidence="18">
    <location>
        <begin position="268"/>
        <end position="270"/>
    </location>
</feature>
<feature type="strand" evidence="18">
    <location>
        <begin position="272"/>
        <end position="279"/>
    </location>
</feature>
<feature type="helix" evidence="18">
    <location>
        <begin position="280"/>
        <end position="294"/>
    </location>
</feature>
<feature type="turn" evidence="18">
    <location>
        <begin position="298"/>
        <end position="300"/>
    </location>
</feature>
<feature type="strand" evidence="18">
    <location>
        <begin position="301"/>
        <end position="305"/>
    </location>
</feature>
<feature type="turn" evidence="18">
    <location>
        <begin position="314"/>
        <end position="316"/>
    </location>
</feature>
<feature type="strand" evidence="18">
    <location>
        <begin position="319"/>
        <end position="323"/>
    </location>
</feature>
<feature type="helix" evidence="18">
    <location>
        <begin position="324"/>
        <end position="328"/>
    </location>
</feature>
<feature type="helix" evidence="18">
    <location>
        <begin position="330"/>
        <end position="333"/>
    </location>
</feature>
<feature type="strand" evidence="18">
    <location>
        <begin position="340"/>
        <end position="345"/>
    </location>
</feature>
<feature type="helix" evidence="18">
    <location>
        <begin position="348"/>
        <end position="350"/>
    </location>
</feature>
<feature type="helix" evidence="18">
    <location>
        <begin position="353"/>
        <end position="368"/>
    </location>
</feature>
<feature type="strand" evidence="18">
    <location>
        <begin position="373"/>
        <end position="379"/>
    </location>
</feature>
<feature type="turn" evidence="18">
    <location>
        <begin position="380"/>
        <end position="382"/>
    </location>
</feature>
<feature type="helix" evidence="18">
    <location>
        <begin position="383"/>
        <end position="389"/>
    </location>
</feature>
<feature type="strand" evidence="18">
    <location>
        <begin position="395"/>
        <end position="398"/>
    </location>
</feature>
<feature type="strand" evidence="18">
    <location>
        <begin position="405"/>
        <end position="409"/>
    </location>
</feature>
<feature type="strand" evidence="17">
    <location>
        <begin position="410"/>
        <end position="412"/>
    </location>
</feature>
<feature type="helix" evidence="18">
    <location>
        <begin position="417"/>
        <end position="431"/>
    </location>
</feature>
<feature type="strand" evidence="18">
    <location>
        <begin position="437"/>
        <end position="441"/>
    </location>
</feature>
<feature type="helix" evidence="18">
    <location>
        <begin position="445"/>
        <end position="462"/>
    </location>
</feature>
<feature type="strand" evidence="18">
    <location>
        <begin position="468"/>
        <end position="473"/>
    </location>
</feature>
<feature type="strand" evidence="20">
    <location>
        <begin position="476"/>
        <end position="478"/>
    </location>
</feature>
<feature type="helix" evidence="18">
    <location>
        <begin position="480"/>
        <end position="486"/>
    </location>
</feature>
<feature type="strand" evidence="18">
    <location>
        <begin position="494"/>
        <end position="503"/>
    </location>
</feature>
<feature type="strand" evidence="18">
    <location>
        <begin position="513"/>
        <end position="518"/>
    </location>
</feature>
<feature type="strand" evidence="18">
    <location>
        <begin position="521"/>
        <end position="527"/>
    </location>
</feature>
<feature type="strand" evidence="18">
    <location>
        <begin position="529"/>
        <end position="540"/>
    </location>
</feature>
<feature type="helix" evidence="18">
    <location>
        <begin position="543"/>
        <end position="550"/>
    </location>
</feature>
<feature type="turn" evidence="18">
    <location>
        <begin position="551"/>
        <end position="553"/>
    </location>
</feature>
<feature type="strand" evidence="18">
    <location>
        <begin position="555"/>
        <end position="557"/>
    </location>
</feature>
<feature type="strand" evidence="18">
    <location>
        <begin position="559"/>
        <end position="565"/>
    </location>
</feature>
<feature type="helix" evidence="18">
    <location>
        <begin position="567"/>
        <end position="571"/>
    </location>
</feature>
<feature type="strand" evidence="17">
    <location>
        <begin position="572"/>
        <end position="574"/>
    </location>
</feature>
<feature type="helix" evidence="18">
    <location>
        <begin position="581"/>
        <end position="583"/>
    </location>
</feature>
<feature type="helix" evidence="18">
    <location>
        <begin position="588"/>
        <end position="597"/>
    </location>
</feature>
<feature type="strand" evidence="18">
    <location>
        <begin position="602"/>
        <end position="605"/>
    </location>
</feature>
<feature type="helix" evidence="18">
    <location>
        <begin position="613"/>
        <end position="625"/>
    </location>
</feature>
<feature type="strand" evidence="18">
    <location>
        <begin position="631"/>
        <end position="633"/>
    </location>
</feature>
<feature type="helix" evidence="18">
    <location>
        <begin position="637"/>
        <end position="642"/>
    </location>
</feature>
<feature type="strand" evidence="18">
    <location>
        <begin position="645"/>
        <end position="647"/>
    </location>
</feature>
<feature type="helix" evidence="18">
    <location>
        <begin position="649"/>
        <end position="660"/>
    </location>
</feature>
<feature type="turn" evidence="18">
    <location>
        <begin position="662"/>
        <end position="666"/>
    </location>
</feature>
<feature type="helix" evidence="18">
    <location>
        <begin position="668"/>
        <end position="679"/>
    </location>
</feature>
<feature type="helix" evidence="18">
    <location>
        <begin position="680"/>
        <end position="683"/>
    </location>
</feature>
<feature type="strand" evidence="18">
    <location>
        <begin position="684"/>
        <end position="687"/>
    </location>
</feature>
<feature type="helix" evidence="18">
    <location>
        <begin position="689"/>
        <end position="696"/>
    </location>
</feature>
<feature type="helix" evidence="18">
    <location>
        <begin position="703"/>
        <end position="716"/>
    </location>
</feature>
<feature type="turn" evidence="18">
    <location>
        <begin position="717"/>
        <end position="719"/>
    </location>
</feature>
<feature type="helix" evidence="18">
    <location>
        <begin position="721"/>
        <end position="726"/>
    </location>
</feature>
<feature type="helix" evidence="18">
    <location>
        <begin position="731"/>
        <end position="751"/>
    </location>
</feature>
<feature type="helix" evidence="18">
    <location>
        <begin position="753"/>
        <end position="763"/>
    </location>
</feature>
<feature type="helix" evidence="18">
    <location>
        <begin position="771"/>
        <end position="782"/>
    </location>
</feature>
<feature type="strand" evidence="18">
    <location>
        <begin position="786"/>
        <end position="790"/>
    </location>
</feature>
<feature type="strand" evidence="18">
    <location>
        <begin position="792"/>
        <end position="797"/>
    </location>
</feature>
<feature type="strand" evidence="18">
    <location>
        <begin position="800"/>
        <end position="803"/>
    </location>
</feature>
<feature type="strand" evidence="17">
    <location>
        <begin position="807"/>
        <end position="809"/>
    </location>
</feature>
<feature type="helix" evidence="18">
    <location>
        <begin position="814"/>
        <end position="820"/>
    </location>
</feature>
<feature type="strand" evidence="18">
    <location>
        <begin position="828"/>
        <end position="831"/>
    </location>
</feature>
<feature type="strand" evidence="18">
    <location>
        <begin position="833"/>
        <end position="845"/>
    </location>
</feature>
<feature type="strand" evidence="18">
    <location>
        <begin position="847"/>
        <end position="849"/>
    </location>
</feature>
<feature type="helix" evidence="18">
    <location>
        <begin position="853"/>
        <end position="858"/>
    </location>
</feature>
<feature type="helix" evidence="18">
    <location>
        <begin position="860"/>
        <end position="866"/>
    </location>
</feature>
<organism>
    <name type="scientific">Saccharomyces cerevisiae (strain ATCC 204508 / S288c)</name>
    <name type="common">Baker's yeast</name>
    <dbReference type="NCBI Taxonomy" id="559292"/>
    <lineage>
        <taxon>Eukaryota</taxon>
        <taxon>Fungi</taxon>
        <taxon>Dikarya</taxon>
        <taxon>Ascomycota</taxon>
        <taxon>Saccharomycotina</taxon>
        <taxon>Saccharomycetes</taxon>
        <taxon>Saccharomycetales</taxon>
        <taxon>Saccharomycetaceae</taxon>
        <taxon>Saccharomyces</taxon>
    </lineage>
</organism>
<protein>
    <recommendedName>
        <fullName>Pre-mRNA-splicing factor ATP-dependent RNA helicase-like protein PRP2</fullName>
        <ecNumber>3.6.4.13</ecNumber>
    </recommendedName>
    <alternativeName>
        <fullName>Pre-mRNA-processing protein 2</fullName>
    </alternativeName>
</protein>
<keyword id="KW-0002">3D-structure</keyword>
<keyword id="KW-0007">Acetylation</keyword>
<keyword id="KW-0067">ATP-binding</keyword>
<keyword id="KW-0378">Hydrolase</keyword>
<keyword id="KW-0507">mRNA processing</keyword>
<keyword id="KW-0508">mRNA splicing</keyword>
<keyword id="KW-0547">Nucleotide-binding</keyword>
<keyword id="KW-0539">Nucleus</keyword>
<keyword id="KW-1185">Reference proteome</keyword>
<comment type="function">
    <text evidence="6 7 9 13 14">Involved in pre-mRNA splicing. Is required together with ATP and at least one other factor, for the first cleavage-ligation reaction. Functions as a molecular motor in the activation of the precatalytic spliceosome for the first transesterification reaction of pre-mRNA splicing by hydrolyzing ATP to cause the activation of the spliceosome without the occurrence of splicing. Capable of hydrolyzing nucleoside triphosphates in the presence of single-stranded RNAs such as poly(U).</text>
</comment>
<comment type="catalytic activity">
    <reaction>
        <text>ATP + H2O = ADP + phosphate + H(+)</text>
        <dbReference type="Rhea" id="RHEA:13065"/>
        <dbReference type="ChEBI" id="CHEBI:15377"/>
        <dbReference type="ChEBI" id="CHEBI:15378"/>
        <dbReference type="ChEBI" id="CHEBI:30616"/>
        <dbReference type="ChEBI" id="CHEBI:43474"/>
        <dbReference type="ChEBI" id="CHEBI:456216"/>
        <dbReference type="EC" id="3.6.4.13"/>
    </reaction>
</comment>
<comment type="subunit">
    <text evidence="6 8 9 11 13 14">Interacts directly with pre-mRNA. According to PubMed:2251118, associated with spliceosomes prior to and throughout step 1 of the splicing reaction. According to PubMed:8943336, it leaves the spliceosome before reaction 1. Interacts with SPP2.</text>
</comment>
<comment type="subcellular location">
    <subcellularLocation>
        <location evidence="4 10">Nucleus</location>
    </subcellularLocation>
</comment>
<comment type="miscellaneous">
    <text evidence="5">Present with 172 molecules/cell in log phase SD medium.</text>
</comment>
<comment type="similarity">
    <text evidence="15">Belongs to the DEAD box helicase family. DEAH subfamily.</text>
</comment>
<proteinExistence type="evidence at protein level"/>
<accession>P20095</accession>
<accession>D6W1I6</accession>
<name>PRP2_YEAST</name>
<evidence type="ECO:0000255" key="1">
    <source>
        <dbReference type="PROSITE-ProRule" id="PRU00541"/>
    </source>
</evidence>
<evidence type="ECO:0000255" key="2">
    <source>
        <dbReference type="PROSITE-ProRule" id="PRU00542"/>
    </source>
</evidence>
<evidence type="ECO:0000256" key="3">
    <source>
        <dbReference type="SAM" id="MobiDB-lite"/>
    </source>
</evidence>
<evidence type="ECO:0000269" key="4">
    <source>
    </source>
</evidence>
<evidence type="ECO:0000269" key="5">
    <source>
    </source>
</evidence>
<evidence type="ECO:0000269" key="6">
    <source>
    </source>
</evidence>
<evidence type="ECO:0000269" key="7">
    <source>
    </source>
</evidence>
<evidence type="ECO:0000269" key="8">
    <source>
    </source>
</evidence>
<evidence type="ECO:0000269" key="9">
    <source>
    </source>
</evidence>
<evidence type="ECO:0000269" key="10">
    <source>
    </source>
</evidence>
<evidence type="ECO:0000269" key="11">
    <source>
    </source>
</evidence>
<evidence type="ECO:0000269" key="12">
    <source>
    </source>
</evidence>
<evidence type="ECO:0000269" key="13">
    <source>
    </source>
</evidence>
<evidence type="ECO:0000269" key="14">
    <source>
    </source>
</evidence>
<evidence type="ECO:0000305" key="15"/>
<evidence type="ECO:0007744" key="16">
    <source>
    </source>
</evidence>
<evidence type="ECO:0007829" key="17">
    <source>
        <dbReference type="PDB" id="7DCP"/>
    </source>
</evidence>
<evidence type="ECO:0007829" key="18">
    <source>
        <dbReference type="PDB" id="7DCQ"/>
    </source>
</evidence>
<evidence type="ECO:0007829" key="19">
    <source>
        <dbReference type="PDB" id="7DCR"/>
    </source>
</evidence>
<evidence type="ECO:0007829" key="20">
    <source>
        <dbReference type="PDB" id="7DD3"/>
    </source>
</evidence>
<gene>
    <name type="primary">PRP2</name>
    <name type="synonym">RNA2</name>
    <name type="ordered locus">YNR011C</name>
    <name type="ORF">N2048</name>
</gene>
<reference key="1">
    <citation type="journal article" date="1990" name="Nucleic Acids Res.">
        <title>The yeast PRP2 protein, a putative RNA-dependent ATPase, shares extensive sequence homology with two other pre-mRNA splicing factors.</title>
        <authorList>
            <person name="Chen J.H."/>
            <person name="Lin R.J."/>
        </authorList>
    </citation>
    <scope>NUCLEOTIDE SEQUENCE [GENOMIC DNA]</scope>
</reference>
<reference key="2">
    <citation type="submission" date="1990-02" db="EMBL/GenBank/DDBJ databases">
        <authorList>
            <person name="Beggs J.D."/>
        </authorList>
    </citation>
    <scope>NUCLEOTIDE SEQUENCE [GENOMIC DNA]</scope>
    <source>
        <strain>DBY939</strain>
    </source>
</reference>
<reference key="3">
    <citation type="journal article" date="1994" name="Yeast">
        <title>Twelve open reading frames revealed in the 23.6 kb segment flanking the centromere on the Saccharomyces cerevisiae chromosome XIV right arm.</title>
        <authorList>
            <person name="Verhasselt P."/>
            <person name="Aert R."/>
            <person name="Voet M."/>
            <person name="Volckaert G."/>
        </authorList>
    </citation>
    <scope>NUCLEOTIDE SEQUENCE [GENOMIC DNA]</scope>
    <source>
        <strain>ATCC 96604 / S288c / FY1679</strain>
    </source>
</reference>
<reference key="4">
    <citation type="journal article" date="1997" name="Nature">
        <title>The nucleotide sequence of Saccharomyces cerevisiae chromosome XIV and its evolutionary implications.</title>
        <authorList>
            <person name="Philippsen P."/>
            <person name="Kleine K."/>
            <person name="Poehlmann R."/>
            <person name="Duesterhoeft A."/>
            <person name="Hamberg K."/>
            <person name="Hegemann J.H."/>
            <person name="Obermaier B."/>
            <person name="Urrestarazu L.A."/>
            <person name="Aert R."/>
            <person name="Albermann K."/>
            <person name="Altmann R."/>
            <person name="Andre B."/>
            <person name="Baladron V."/>
            <person name="Ballesta J.P.G."/>
            <person name="Becam A.-M."/>
            <person name="Beinhauer J.D."/>
            <person name="Boskovic J."/>
            <person name="Buitrago M.J."/>
            <person name="Bussereau F."/>
            <person name="Coster F."/>
            <person name="Crouzet M."/>
            <person name="D'Angelo M."/>
            <person name="Dal Pero F."/>
            <person name="De Antoni A."/>
            <person name="del Rey F."/>
            <person name="Doignon F."/>
            <person name="Domdey H."/>
            <person name="Dubois E."/>
            <person name="Fiedler T.A."/>
            <person name="Fleig U."/>
            <person name="Floeth M."/>
            <person name="Fritz C."/>
            <person name="Gaillardin C."/>
            <person name="Garcia-Cantalejo J.M."/>
            <person name="Glansdorff N."/>
            <person name="Goffeau A."/>
            <person name="Gueldener U."/>
            <person name="Herbert C.J."/>
            <person name="Heumann K."/>
            <person name="Heuss-Neitzel D."/>
            <person name="Hilbert H."/>
            <person name="Hinni K."/>
            <person name="Iraqui Houssaini I."/>
            <person name="Jacquet M."/>
            <person name="Jimenez A."/>
            <person name="Jonniaux J.-L."/>
            <person name="Karpfinger-Hartl L."/>
            <person name="Lanfranchi G."/>
            <person name="Lepingle A."/>
            <person name="Levesque H."/>
            <person name="Lyck R."/>
            <person name="Maftahi M."/>
            <person name="Mallet L."/>
            <person name="Maurer C.T.C."/>
            <person name="Messenguy F."/>
            <person name="Mewes H.-W."/>
            <person name="Moestl D."/>
            <person name="Nasr F."/>
            <person name="Nicaud J.-M."/>
            <person name="Niedenthal R.K."/>
            <person name="Pandolfo D."/>
            <person name="Pierard A."/>
            <person name="Piravandi E."/>
            <person name="Planta R.J."/>
            <person name="Pohl T.M."/>
            <person name="Purnelle B."/>
            <person name="Rebischung C."/>
            <person name="Remacha M.A."/>
            <person name="Revuelta J.L."/>
            <person name="Rinke M."/>
            <person name="Saiz J.E."/>
            <person name="Sartorello F."/>
            <person name="Scherens B."/>
            <person name="Sen-Gupta M."/>
            <person name="Soler-Mira A."/>
            <person name="Urbanus J.H.M."/>
            <person name="Valle G."/>
            <person name="Van Dyck L."/>
            <person name="Verhasselt P."/>
            <person name="Vierendeels F."/>
            <person name="Vissers S."/>
            <person name="Voet M."/>
            <person name="Volckaert G."/>
            <person name="Wach A."/>
            <person name="Wambutt R."/>
            <person name="Wedler H."/>
            <person name="Zollner A."/>
            <person name="Hani J."/>
        </authorList>
    </citation>
    <scope>NUCLEOTIDE SEQUENCE [LARGE SCALE GENOMIC DNA]</scope>
    <source>
        <strain>ATCC 204508 / S288c</strain>
    </source>
</reference>
<reference key="5">
    <citation type="journal article" date="2014" name="G3 (Bethesda)">
        <title>The reference genome sequence of Saccharomyces cerevisiae: Then and now.</title>
        <authorList>
            <person name="Engel S.R."/>
            <person name="Dietrich F.S."/>
            <person name="Fisk D.G."/>
            <person name="Binkley G."/>
            <person name="Balakrishnan R."/>
            <person name="Costanzo M.C."/>
            <person name="Dwight S.S."/>
            <person name="Hitz B.C."/>
            <person name="Karra K."/>
            <person name="Nash R.S."/>
            <person name="Weng S."/>
            <person name="Wong E.D."/>
            <person name="Lloyd P."/>
            <person name="Skrzypek M.S."/>
            <person name="Miyasato S.R."/>
            <person name="Simison M."/>
            <person name="Cherry J.M."/>
        </authorList>
    </citation>
    <scope>GENOME REANNOTATION</scope>
    <source>
        <strain>ATCC 204508 / S288c</strain>
    </source>
</reference>
<reference key="6">
    <citation type="journal article" date="1986" name="J. Cell Biol.">
        <title>Identification and nuclear localization of yeast pre-messenger RNA processing components: RNA2 and RNA3 proteins.</title>
        <authorList>
            <person name="Last R.L."/>
            <person name="Woolford J.L. Jr."/>
        </authorList>
    </citation>
    <scope>SUBCELLULAR LOCATION</scope>
</reference>
<reference key="7">
    <citation type="journal article" date="1990" name="Nucleic Acids Res.">
        <title>Interactions of PRP2 protein with pre-mRNA splicing complexes in Saccharomyces cerevisiae.</title>
        <authorList>
            <person name="King D.S."/>
            <person name="Beggs J.D."/>
        </authorList>
    </citation>
    <scope>FUNCTION</scope>
    <scope>INTERACTION WITH SPLICEOSOME</scope>
</reference>
<reference key="8">
    <citation type="journal article" date="1992" name="EMBO J.">
        <title>The purified yeast pre-mRNA splicing factor PRP2 is an RNA-dependent NTPase.</title>
        <authorList>
            <person name="Kim S.-H."/>
            <person name="Smith J."/>
            <person name="Claude A."/>
            <person name="Lin R.-J."/>
        </authorList>
    </citation>
    <scope>FUNCTION AS A NTPASE</scope>
    <scope>LACK OF HELICASE ACTIVITY</scope>
</reference>
<reference key="9">
    <citation type="journal article" date="1994" name="EMBO J.">
        <title>A dominant negative mutation in the conserved RNA helicase motif 'SAT' causes splicing factor PRP2 to stall in spliceosomes.</title>
        <authorList>
            <person name="Plumpton M."/>
            <person name="McGarvey M."/>
            <person name="Beggs J.D."/>
        </authorList>
    </citation>
    <scope>MUTAGENESIS OF SER-378</scope>
</reference>
<reference key="10">
    <citation type="journal article" date="1994" name="EMBO J.">
        <title>The splicing factor PRP2, a putative RNA helicase, interacts directly with pre-mRNA.</title>
        <authorList>
            <person name="Teigelkamp S."/>
            <person name="McGarvey M."/>
            <person name="Plumpton M."/>
            <person name="Beggs J.D."/>
        </authorList>
    </citation>
    <scope>FUNCTION</scope>
    <scope>INTERACTION WITH PRE-MRNA</scope>
</reference>
<reference key="11">
    <citation type="journal article" date="1995" name="RNA">
        <title>The final stages of spliceosome maturation require Spp2p that can interact with the DEAH box protein Prp2p and promote step 1 of splicing.</title>
        <authorList>
            <person name="Roy J."/>
            <person name="Kim K."/>
            <person name="Maddock J.R."/>
            <person name="Anthony J.G."/>
            <person name="Woolford J.L. Jr."/>
        </authorList>
    </citation>
    <scope>INTERACTION WITH SPP2</scope>
</reference>
<reference key="12">
    <citation type="journal article" date="1996" name="Mol. Cell. Biol.">
        <title>Spliceosome activation by PRP2 ATPase prior to the first transesterification reaction of pre-mRNA splicing.</title>
        <authorList>
            <person name="Kim S.-H."/>
            <person name="Lin R.-J."/>
        </authorList>
    </citation>
    <scope>FUNCTION AS AN ATPASE</scope>
    <scope>INTERACTION WITH SPLICEOSOME</scope>
</reference>
<reference key="13">
    <citation type="journal article" date="2003" name="Nature">
        <title>Global analysis of protein localization in budding yeast.</title>
        <authorList>
            <person name="Huh W.-K."/>
            <person name="Falvo J.V."/>
            <person name="Gerke L.C."/>
            <person name="Carroll A.S."/>
            <person name="Howson R.W."/>
            <person name="Weissman J.S."/>
            <person name="O'Shea E.K."/>
        </authorList>
    </citation>
    <scope>SUBCELLULAR LOCATION [LARGE SCALE ANALYSIS]</scope>
</reference>
<reference key="14">
    <citation type="journal article" date="2003" name="Nature">
        <title>Global analysis of protein expression in yeast.</title>
        <authorList>
            <person name="Ghaemmaghami S."/>
            <person name="Huh W.-K."/>
            <person name="Bower K."/>
            <person name="Howson R.W."/>
            <person name="Belle A."/>
            <person name="Dephoure N."/>
            <person name="O'Shea E.K."/>
            <person name="Weissman J.S."/>
        </authorList>
    </citation>
    <scope>LEVEL OF PROTEIN EXPRESSION [LARGE SCALE ANALYSIS]</scope>
</reference>
<reference key="15">
    <citation type="journal article" date="2004" name="Mol. Cell. Biol.">
        <title>Interaction between a G-patch protein and a spliceosomal DEXD/H-box ATPase that is critical for splicing.</title>
        <authorList>
            <person name="Silverman E.J."/>
            <person name="Maeda A."/>
            <person name="Wei J."/>
            <person name="Smith P."/>
            <person name="Beggs J.D."/>
            <person name="Lin R.-J."/>
        </authorList>
    </citation>
    <scope>INTERACTION WITH SPP2</scope>
    <scope>MUTAGENESIS OF ASP-845; 845-ASP-CYS-846 AND 854-TRP-LEU-855</scope>
</reference>
<reference key="16">
    <citation type="journal article" date="2004" name="RNA">
        <title>Definition of a spliceosome interaction domain in yeast Prp2 ATPase.</title>
        <authorList>
            <person name="Edwalds-Gilbert G."/>
            <person name="Kim D.-H."/>
            <person name="Silverman E."/>
            <person name="Lin R.-J."/>
        </authorList>
    </citation>
    <scope>FUNCTION AS AN ATPASE</scope>
    <scope>INTERACTION WITH SPLICEOSOME</scope>
    <scope>DELETION MUTANTS</scope>
    <scope>MUTAGENESIS OF HIS-349; GLN-548; GLY-551 AND 845-ASP-CYS-846</scope>
</reference>
<reference key="17">
    <citation type="journal article" date="2012" name="Proc. Natl. Acad. Sci. U.S.A.">
        <title>N-terminal acetylome analyses and functional insights of the N-terminal acetyltransferase NatB.</title>
        <authorList>
            <person name="Van Damme P."/>
            <person name="Lasa M."/>
            <person name="Polevoda B."/>
            <person name="Gazquez C."/>
            <person name="Elosegui-Artola A."/>
            <person name="Kim D.S."/>
            <person name="De Juan-Pardo E."/>
            <person name="Demeyer K."/>
            <person name="Hole K."/>
            <person name="Larrea E."/>
            <person name="Timmerman E."/>
            <person name="Prieto J."/>
            <person name="Arnesen T."/>
            <person name="Sherman F."/>
            <person name="Gevaert K."/>
            <person name="Aldabe R."/>
        </authorList>
    </citation>
    <scope>ACETYLATION [LARGE SCALE ANALYSIS] AT SER-2</scope>
    <scope>CLEAVAGE OF INITIATOR METHIONINE [LARGE SCALE ANALYSIS]</scope>
    <scope>IDENTIFICATION BY MASS SPECTROMETRY [LARGE SCALE ANALYSIS]</scope>
</reference>